<protein>
    <recommendedName>
        <fullName evidence="4">Zinc metalloproteinase/disintegrin-like CdtV1</fullName>
        <shortName evidence="5">SVMP</shortName>
    </recommendedName>
    <component>
        <recommendedName>
            <fullName evidence="4">Zinc metalloproteinase/disintegrin-like CdtV2</fullName>
        </recommendedName>
    </component>
    <component>
        <recommendedName>
            <fullName evidence="4">Zinc metalloproteinase/disintegrin-like CdtV3</fullName>
        </recommendedName>
    </component>
</protein>
<name>VM2CD_CRODU</name>
<dbReference type="SMR" id="C0HLL1"/>
<dbReference type="GO" id="GO:0005576">
    <property type="term" value="C:extracellular region"/>
    <property type="evidence" value="ECO:0007669"/>
    <property type="project" value="UniProtKB-SubCell"/>
</dbReference>
<dbReference type="GO" id="GO:0016787">
    <property type="term" value="F:hydrolase activity"/>
    <property type="evidence" value="ECO:0007669"/>
    <property type="project" value="UniProtKB-KW"/>
</dbReference>
<dbReference type="GO" id="GO:0090729">
    <property type="term" value="F:toxin activity"/>
    <property type="evidence" value="ECO:0007669"/>
    <property type="project" value="UniProtKB-KW"/>
</dbReference>
<dbReference type="Gene3D" id="4.10.70.10">
    <property type="entry name" value="Disintegrin domain"/>
    <property type="match status" value="1"/>
</dbReference>
<dbReference type="InterPro" id="IPR001762">
    <property type="entry name" value="Disintegrin_dom"/>
</dbReference>
<dbReference type="InterPro" id="IPR036436">
    <property type="entry name" value="Disintegrin_dom_sf"/>
</dbReference>
<dbReference type="SUPFAM" id="SSF57552">
    <property type="entry name" value="Blood coagulation inhibitor (disintegrin)"/>
    <property type="match status" value="1"/>
</dbReference>
<dbReference type="PROSITE" id="PS50214">
    <property type="entry name" value="DISINTEGRIN_2"/>
    <property type="match status" value="1"/>
</dbReference>
<sequence length="32" mass="3411">ARIECDCGSIENPCCYATTCKLRPGSQCAEGM</sequence>
<reference evidence="5" key="1">
    <citation type="journal article" date="2018" name="J. Proteome Res.">
        <title>In-depth venome of the Brazilian rattlesnake crotalus durissus terrificus: an integrative approach combining its venom gland transcriptome and venom proteome.</title>
        <authorList>
            <person name="Wiezel G.A."/>
            <person name="Shibao P.Y.T."/>
            <person name="Cologna C.T."/>
            <person name="Morandi Filho R."/>
            <person name="Ueira-Vieira C."/>
            <person name="De Pauw E."/>
            <person name="Quinton L."/>
            <person name="Arantes E.C."/>
        </authorList>
    </citation>
    <scope>PROTEIN SEQUENCE</scope>
    <scope>SUBCELLULAR LOCATION</scope>
    <source>
        <tissue evidence="4">Venom</tissue>
    </source>
</reference>
<proteinExistence type="evidence at protein level"/>
<accession>C0HLL1</accession>
<comment type="function">
    <text evidence="1">Snake venom metalloproteinase that impairs hemostasis in the envenomed animal.</text>
</comment>
<comment type="subunit">
    <text evidence="2">Monomer.</text>
</comment>
<comment type="subcellular location">
    <subcellularLocation>
        <location evidence="3">Secreted</location>
    </subcellularLocation>
</comment>
<comment type="tissue specificity">
    <text evidence="3">Expressed by the venom gland.</text>
</comment>
<comment type="similarity">
    <text evidence="5">Belongs to the venom metalloproteinase (M12B) family. P-II subfamily. P-IIa sub-subfamily.</text>
</comment>
<keyword id="KW-0903">Direct protein sequencing</keyword>
<keyword id="KW-1015">Disulfide bond</keyword>
<keyword id="KW-0378">Hydrolase</keyword>
<keyword id="KW-0964">Secreted</keyword>
<keyword id="KW-0800">Toxin</keyword>
<organism evidence="4">
    <name type="scientific">Crotalus durissus terrificus</name>
    <name type="common">South American rattlesnake</name>
    <dbReference type="NCBI Taxonomy" id="8732"/>
    <lineage>
        <taxon>Eukaryota</taxon>
        <taxon>Metazoa</taxon>
        <taxon>Chordata</taxon>
        <taxon>Craniata</taxon>
        <taxon>Vertebrata</taxon>
        <taxon>Euteleostomi</taxon>
        <taxon>Lepidosauria</taxon>
        <taxon>Squamata</taxon>
        <taxon>Bifurcata</taxon>
        <taxon>Unidentata</taxon>
        <taxon>Episquamata</taxon>
        <taxon>Toxicofera</taxon>
        <taxon>Serpentes</taxon>
        <taxon>Colubroidea</taxon>
        <taxon>Viperidae</taxon>
        <taxon>Crotalinae</taxon>
        <taxon>Crotalus</taxon>
    </lineage>
</organism>
<evidence type="ECO:0000250" key="1">
    <source>
        <dbReference type="UniProtKB" id="P34182"/>
    </source>
</evidence>
<evidence type="ECO:0000250" key="2">
    <source>
        <dbReference type="UniProtKB" id="Q90WC0"/>
    </source>
</evidence>
<evidence type="ECO:0000269" key="3">
    <source>
    </source>
</evidence>
<evidence type="ECO:0000303" key="4">
    <source>
    </source>
</evidence>
<evidence type="ECO:0000305" key="5"/>
<feature type="chain" id="PRO_0000447716" description="Zinc metalloproteinase/disintegrin-like CdtV1" evidence="5">
    <location>
        <begin position="1"/>
        <end position="32" status="greater than"/>
    </location>
</feature>
<feature type="chain" id="PRO_0000447717" description="Zinc metalloproteinase/disintegrin-like CdtV2" evidence="5">
    <location>
        <begin position="2"/>
        <end position="32" status="greater than"/>
    </location>
</feature>
<feature type="chain" id="PRO_0000447718" description="Zinc metalloproteinase/disintegrin-like CdtV3" evidence="5">
    <location>
        <begin position="3"/>
        <end position="32" status="greater than"/>
    </location>
</feature>
<feature type="disulfide bond" evidence="2">
    <location>
        <begin position="5"/>
        <end position="14"/>
    </location>
</feature>
<feature type="disulfide bond" evidence="2">
    <location>
        <begin position="7"/>
        <end position="15"/>
    </location>
</feature>
<feature type="non-terminal residue" evidence="4">
    <location>
        <position position="32"/>
    </location>
</feature>